<sequence>MLMGEFTHTIDSKGRLIIPAKFREQLGAHFIVTRGLDGCLFGYPLNEWAILEQKLKALPLTKRDARAFVRFLYSAATDCEIDKQGRINIPITLRTHASLEKKCVIVGVSNRLEIWSAERWNKFTSETADNFDEIAEDLNIDF</sequence>
<proteinExistence type="inferred from homology"/>
<evidence type="ECO:0000255" key="1">
    <source>
        <dbReference type="HAMAP-Rule" id="MF_01008"/>
    </source>
</evidence>
<evidence type="ECO:0000255" key="2">
    <source>
        <dbReference type="PROSITE-ProRule" id="PRU01076"/>
    </source>
</evidence>
<gene>
    <name evidence="1" type="primary">mraZ</name>
    <name type="ordered locus">LAR_0566</name>
</gene>
<organism>
    <name type="scientific">Limosilactobacillus reuteri subsp. reuteri (strain JCM 1112)</name>
    <name type="common">Lactobacillus reuteri</name>
    <dbReference type="NCBI Taxonomy" id="557433"/>
    <lineage>
        <taxon>Bacteria</taxon>
        <taxon>Bacillati</taxon>
        <taxon>Bacillota</taxon>
        <taxon>Bacilli</taxon>
        <taxon>Lactobacillales</taxon>
        <taxon>Lactobacillaceae</taxon>
        <taxon>Limosilactobacillus</taxon>
    </lineage>
</organism>
<comment type="subunit">
    <text evidence="1">Forms oligomers.</text>
</comment>
<comment type="subcellular location">
    <subcellularLocation>
        <location evidence="1">Cytoplasm</location>
        <location evidence="1">Nucleoid</location>
    </subcellularLocation>
</comment>
<comment type="similarity">
    <text evidence="1">Belongs to the MraZ family.</text>
</comment>
<accession>B2G6K0</accession>
<name>MRAZ_LIMRJ</name>
<dbReference type="EMBL" id="AP007281">
    <property type="protein sequence ID" value="BAG25082.1"/>
    <property type="molecule type" value="Genomic_DNA"/>
</dbReference>
<dbReference type="RefSeq" id="WP_003666752.1">
    <property type="nucleotide sequence ID" value="NC_010609.1"/>
</dbReference>
<dbReference type="SMR" id="B2G6K0"/>
<dbReference type="GeneID" id="77190736"/>
<dbReference type="KEGG" id="lrf:LAR_0566"/>
<dbReference type="HOGENOM" id="CLU_107907_0_5_9"/>
<dbReference type="GO" id="GO:0005737">
    <property type="term" value="C:cytoplasm"/>
    <property type="evidence" value="ECO:0007669"/>
    <property type="project" value="UniProtKB-UniRule"/>
</dbReference>
<dbReference type="GO" id="GO:0009295">
    <property type="term" value="C:nucleoid"/>
    <property type="evidence" value="ECO:0007669"/>
    <property type="project" value="UniProtKB-SubCell"/>
</dbReference>
<dbReference type="GO" id="GO:0003700">
    <property type="term" value="F:DNA-binding transcription factor activity"/>
    <property type="evidence" value="ECO:0007669"/>
    <property type="project" value="UniProtKB-UniRule"/>
</dbReference>
<dbReference type="GO" id="GO:0000976">
    <property type="term" value="F:transcription cis-regulatory region binding"/>
    <property type="evidence" value="ECO:0007669"/>
    <property type="project" value="TreeGrafter"/>
</dbReference>
<dbReference type="GO" id="GO:2000143">
    <property type="term" value="P:negative regulation of DNA-templated transcription initiation"/>
    <property type="evidence" value="ECO:0007669"/>
    <property type="project" value="TreeGrafter"/>
</dbReference>
<dbReference type="CDD" id="cd16321">
    <property type="entry name" value="MraZ_C"/>
    <property type="match status" value="1"/>
</dbReference>
<dbReference type="CDD" id="cd16320">
    <property type="entry name" value="MraZ_N"/>
    <property type="match status" value="1"/>
</dbReference>
<dbReference type="FunFam" id="3.40.1550.20:FF:000002">
    <property type="entry name" value="Transcriptional regulator MraZ"/>
    <property type="match status" value="1"/>
</dbReference>
<dbReference type="Gene3D" id="3.40.1550.20">
    <property type="entry name" value="Transcriptional regulator MraZ domain"/>
    <property type="match status" value="1"/>
</dbReference>
<dbReference type="HAMAP" id="MF_01008">
    <property type="entry name" value="MraZ"/>
    <property type="match status" value="1"/>
</dbReference>
<dbReference type="InterPro" id="IPR003444">
    <property type="entry name" value="MraZ"/>
</dbReference>
<dbReference type="InterPro" id="IPR035644">
    <property type="entry name" value="MraZ_C"/>
</dbReference>
<dbReference type="InterPro" id="IPR020603">
    <property type="entry name" value="MraZ_dom"/>
</dbReference>
<dbReference type="InterPro" id="IPR035642">
    <property type="entry name" value="MraZ_N"/>
</dbReference>
<dbReference type="InterPro" id="IPR038619">
    <property type="entry name" value="MraZ_sf"/>
</dbReference>
<dbReference type="InterPro" id="IPR007159">
    <property type="entry name" value="SpoVT-AbrB_dom"/>
</dbReference>
<dbReference type="InterPro" id="IPR037914">
    <property type="entry name" value="SpoVT-AbrB_sf"/>
</dbReference>
<dbReference type="NCBIfam" id="TIGR00242">
    <property type="entry name" value="division/cell wall cluster transcriptional repressor MraZ"/>
    <property type="match status" value="1"/>
</dbReference>
<dbReference type="PANTHER" id="PTHR34701">
    <property type="entry name" value="TRANSCRIPTIONAL REGULATOR MRAZ"/>
    <property type="match status" value="1"/>
</dbReference>
<dbReference type="PANTHER" id="PTHR34701:SF1">
    <property type="entry name" value="TRANSCRIPTIONAL REGULATOR MRAZ"/>
    <property type="match status" value="1"/>
</dbReference>
<dbReference type="Pfam" id="PF02381">
    <property type="entry name" value="MraZ"/>
    <property type="match status" value="2"/>
</dbReference>
<dbReference type="SUPFAM" id="SSF89447">
    <property type="entry name" value="AbrB/MazE/MraZ-like"/>
    <property type="match status" value="1"/>
</dbReference>
<dbReference type="PROSITE" id="PS51740">
    <property type="entry name" value="SPOVT_ABRB"/>
    <property type="match status" value="2"/>
</dbReference>
<feature type="chain" id="PRO_1000134807" description="Transcriptional regulator MraZ">
    <location>
        <begin position="1"/>
        <end position="142"/>
    </location>
</feature>
<feature type="domain" description="SpoVT-AbrB 1" evidence="2">
    <location>
        <begin position="5"/>
        <end position="47"/>
    </location>
</feature>
<feature type="domain" description="SpoVT-AbrB 2" evidence="2">
    <location>
        <begin position="76"/>
        <end position="119"/>
    </location>
</feature>
<keyword id="KW-0963">Cytoplasm</keyword>
<keyword id="KW-0238">DNA-binding</keyword>
<keyword id="KW-0677">Repeat</keyword>
<keyword id="KW-0804">Transcription</keyword>
<keyword id="KW-0805">Transcription regulation</keyword>
<protein>
    <recommendedName>
        <fullName>Transcriptional regulator MraZ</fullName>
    </recommendedName>
</protein>
<reference key="1">
    <citation type="journal article" date="2008" name="DNA Res.">
        <title>Comparative genome analysis of Lactobacillus reuteri and Lactobacillus fermentum reveal a genomic island for reuterin and cobalamin production.</title>
        <authorList>
            <person name="Morita H."/>
            <person name="Toh H."/>
            <person name="Fukuda S."/>
            <person name="Horikawa H."/>
            <person name="Oshima K."/>
            <person name="Suzuki T."/>
            <person name="Murakami M."/>
            <person name="Hisamatsu S."/>
            <person name="Kato Y."/>
            <person name="Takizawa T."/>
            <person name="Fukuoka H."/>
            <person name="Yoshimura T."/>
            <person name="Itoh K."/>
            <person name="O'Sullivan D.J."/>
            <person name="McKay L.L."/>
            <person name="Ohno H."/>
            <person name="Kikuchi J."/>
            <person name="Masaoka T."/>
            <person name="Hattori M."/>
        </authorList>
    </citation>
    <scope>NUCLEOTIDE SEQUENCE [LARGE SCALE GENOMIC DNA]</scope>
    <source>
        <strain>JCM 1112</strain>
    </source>
</reference>